<gene>
    <name evidence="1" type="primary">betA</name>
    <name type="ordered locus">Bmul_3536</name>
    <name type="ordered locus">BMULJ_04981</name>
</gene>
<feature type="chain" id="PRO_1000133323" description="Oxygen-dependent choline dehydrogenase">
    <location>
        <begin position="1"/>
        <end position="566"/>
    </location>
</feature>
<feature type="region of interest" description="Disordered" evidence="2">
    <location>
        <begin position="182"/>
        <end position="204"/>
    </location>
</feature>
<feature type="active site" description="Proton acceptor" evidence="1">
    <location>
        <position position="474"/>
    </location>
</feature>
<feature type="binding site" evidence="1">
    <location>
        <begin position="7"/>
        <end position="36"/>
    </location>
    <ligand>
        <name>FAD</name>
        <dbReference type="ChEBI" id="CHEBI:57692"/>
    </ligand>
</feature>
<proteinExistence type="inferred from homology"/>
<protein>
    <recommendedName>
        <fullName evidence="1">Oxygen-dependent choline dehydrogenase</fullName>
        <shortName evidence="1">CDH</shortName>
        <shortName evidence="1">CHD</shortName>
        <ecNumber evidence="1">1.1.99.1</ecNumber>
    </recommendedName>
    <alternativeName>
        <fullName evidence="1">Betaine aldehyde dehydrogenase</fullName>
        <shortName evidence="1">BADH</shortName>
        <ecNumber evidence="1">1.2.1.8</ecNumber>
    </alternativeName>
</protein>
<organism>
    <name type="scientific">Burkholderia multivorans (strain ATCC 17616 / 249)</name>
    <dbReference type="NCBI Taxonomy" id="395019"/>
    <lineage>
        <taxon>Bacteria</taxon>
        <taxon>Pseudomonadati</taxon>
        <taxon>Pseudomonadota</taxon>
        <taxon>Betaproteobacteria</taxon>
        <taxon>Burkholderiales</taxon>
        <taxon>Burkholderiaceae</taxon>
        <taxon>Burkholderia</taxon>
        <taxon>Burkholderia cepacia complex</taxon>
    </lineage>
</organism>
<dbReference type="EC" id="1.1.99.1" evidence="1"/>
<dbReference type="EC" id="1.2.1.8" evidence="1"/>
<dbReference type="EMBL" id="CP000869">
    <property type="protein sequence ID" value="ABX17220.1"/>
    <property type="molecule type" value="Genomic_DNA"/>
</dbReference>
<dbReference type="EMBL" id="AP009386">
    <property type="protein sequence ID" value="BAG46827.1"/>
    <property type="molecule type" value="Genomic_DNA"/>
</dbReference>
<dbReference type="RefSeq" id="WP_006406015.1">
    <property type="nucleotide sequence ID" value="NC_010805.1"/>
</dbReference>
<dbReference type="SMR" id="A9AMZ9"/>
<dbReference type="STRING" id="395019.BMULJ_04981"/>
<dbReference type="CAZy" id="AA3">
    <property type="family name" value="Auxiliary Activities 3"/>
</dbReference>
<dbReference type="KEGG" id="bmj:BMULJ_04981"/>
<dbReference type="KEGG" id="bmu:Bmul_3536"/>
<dbReference type="eggNOG" id="COG2303">
    <property type="taxonomic scope" value="Bacteria"/>
</dbReference>
<dbReference type="HOGENOM" id="CLU_002865_7_1_4"/>
<dbReference type="UniPathway" id="UPA00529">
    <property type="reaction ID" value="UER00385"/>
</dbReference>
<dbReference type="Proteomes" id="UP000008815">
    <property type="component" value="Chromosome 2"/>
</dbReference>
<dbReference type="GO" id="GO:0016020">
    <property type="term" value="C:membrane"/>
    <property type="evidence" value="ECO:0007669"/>
    <property type="project" value="TreeGrafter"/>
</dbReference>
<dbReference type="GO" id="GO:0008802">
    <property type="term" value="F:betaine-aldehyde dehydrogenase (NAD+) activity"/>
    <property type="evidence" value="ECO:0007669"/>
    <property type="project" value="UniProtKB-EC"/>
</dbReference>
<dbReference type="GO" id="GO:0008812">
    <property type="term" value="F:choline dehydrogenase activity"/>
    <property type="evidence" value="ECO:0007669"/>
    <property type="project" value="UniProtKB-UniRule"/>
</dbReference>
<dbReference type="GO" id="GO:0050660">
    <property type="term" value="F:flavin adenine dinucleotide binding"/>
    <property type="evidence" value="ECO:0007669"/>
    <property type="project" value="InterPro"/>
</dbReference>
<dbReference type="GO" id="GO:0019285">
    <property type="term" value="P:glycine betaine biosynthetic process from choline"/>
    <property type="evidence" value="ECO:0007669"/>
    <property type="project" value="UniProtKB-UniRule"/>
</dbReference>
<dbReference type="Gene3D" id="3.50.50.60">
    <property type="entry name" value="FAD/NAD(P)-binding domain"/>
    <property type="match status" value="1"/>
</dbReference>
<dbReference type="Gene3D" id="3.30.560.10">
    <property type="entry name" value="Glucose Oxidase, domain 3"/>
    <property type="match status" value="1"/>
</dbReference>
<dbReference type="HAMAP" id="MF_00750">
    <property type="entry name" value="Choline_dehydrogen"/>
    <property type="match status" value="1"/>
</dbReference>
<dbReference type="InterPro" id="IPR011533">
    <property type="entry name" value="BetA"/>
</dbReference>
<dbReference type="InterPro" id="IPR036188">
    <property type="entry name" value="FAD/NAD-bd_sf"/>
</dbReference>
<dbReference type="InterPro" id="IPR012132">
    <property type="entry name" value="GMC_OxRdtase"/>
</dbReference>
<dbReference type="InterPro" id="IPR000172">
    <property type="entry name" value="GMC_OxRdtase_N"/>
</dbReference>
<dbReference type="InterPro" id="IPR007867">
    <property type="entry name" value="GMC_OxRtase_C"/>
</dbReference>
<dbReference type="NCBIfam" id="TIGR01810">
    <property type="entry name" value="betA"/>
    <property type="match status" value="1"/>
</dbReference>
<dbReference type="NCBIfam" id="NF002550">
    <property type="entry name" value="PRK02106.1"/>
    <property type="match status" value="1"/>
</dbReference>
<dbReference type="PANTHER" id="PTHR11552:SF147">
    <property type="entry name" value="CHOLINE DEHYDROGENASE, MITOCHONDRIAL"/>
    <property type="match status" value="1"/>
</dbReference>
<dbReference type="PANTHER" id="PTHR11552">
    <property type="entry name" value="GLUCOSE-METHANOL-CHOLINE GMC OXIDOREDUCTASE"/>
    <property type="match status" value="1"/>
</dbReference>
<dbReference type="Pfam" id="PF05199">
    <property type="entry name" value="GMC_oxred_C"/>
    <property type="match status" value="1"/>
</dbReference>
<dbReference type="Pfam" id="PF00732">
    <property type="entry name" value="GMC_oxred_N"/>
    <property type="match status" value="1"/>
</dbReference>
<dbReference type="PIRSF" id="PIRSF000137">
    <property type="entry name" value="Alcohol_oxidase"/>
    <property type="match status" value="1"/>
</dbReference>
<dbReference type="SUPFAM" id="SSF54373">
    <property type="entry name" value="FAD-linked reductases, C-terminal domain"/>
    <property type="match status" value="1"/>
</dbReference>
<dbReference type="SUPFAM" id="SSF51905">
    <property type="entry name" value="FAD/NAD(P)-binding domain"/>
    <property type="match status" value="1"/>
</dbReference>
<dbReference type="PROSITE" id="PS00623">
    <property type="entry name" value="GMC_OXRED_1"/>
    <property type="match status" value="1"/>
</dbReference>
<dbReference type="PROSITE" id="PS00624">
    <property type="entry name" value="GMC_OXRED_2"/>
    <property type="match status" value="1"/>
</dbReference>
<keyword id="KW-0274">FAD</keyword>
<keyword id="KW-0285">Flavoprotein</keyword>
<keyword id="KW-0520">NAD</keyword>
<keyword id="KW-0560">Oxidoreductase</keyword>
<keyword id="KW-1185">Reference proteome</keyword>
<accession>A9AMZ9</accession>
<reference key="1">
    <citation type="submission" date="2007-10" db="EMBL/GenBank/DDBJ databases">
        <title>Complete sequence of chromosome 2 of Burkholderia multivorans ATCC 17616.</title>
        <authorList>
            <person name="Copeland A."/>
            <person name="Lucas S."/>
            <person name="Lapidus A."/>
            <person name="Barry K."/>
            <person name="Glavina del Rio T."/>
            <person name="Dalin E."/>
            <person name="Tice H."/>
            <person name="Pitluck S."/>
            <person name="Chain P."/>
            <person name="Malfatti S."/>
            <person name="Shin M."/>
            <person name="Vergez L."/>
            <person name="Schmutz J."/>
            <person name="Larimer F."/>
            <person name="Land M."/>
            <person name="Hauser L."/>
            <person name="Kyrpides N."/>
            <person name="Kim E."/>
            <person name="Tiedje J."/>
            <person name="Richardson P."/>
        </authorList>
    </citation>
    <scope>NUCLEOTIDE SEQUENCE [LARGE SCALE GENOMIC DNA]</scope>
    <source>
        <strain>ATCC 17616 / 249</strain>
    </source>
</reference>
<reference key="2">
    <citation type="submission" date="2007-04" db="EMBL/GenBank/DDBJ databases">
        <title>Complete genome sequence of Burkholderia multivorans ATCC 17616.</title>
        <authorList>
            <person name="Ohtsubo Y."/>
            <person name="Yamashita A."/>
            <person name="Kurokawa K."/>
            <person name="Takami H."/>
            <person name="Yuhara S."/>
            <person name="Nishiyama E."/>
            <person name="Endo R."/>
            <person name="Miyazaki R."/>
            <person name="Ono A."/>
            <person name="Yano K."/>
            <person name="Ito M."/>
            <person name="Sota M."/>
            <person name="Yuji N."/>
            <person name="Hattori M."/>
            <person name="Tsuda M."/>
        </authorList>
    </citation>
    <scope>NUCLEOTIDE SEQUENCE [LARGE SCALE GENOMIC DNA]</scope>
    <source>
        <strain>ATCC 17616 / 249</strain>
    </source>
</reference>
<comment type="function">
    <text evidence="1">Involved in the biosynthesis of the osmoprotectant glycine betaine. Catalyzes the oxidation of choline to betaine aldehyde and betaine aldehyde to glycine betaine at the same rate.</text>
</comment>
<comment type="catalytic activity">
    <reaction evidence="1">
        <text>choline + A = betaine aldehyde + AH2</text>
        <dbReference type="Rhea" id="RHEA:17433"/>
        <dbReference type="ChEBI" id="CHEBI:13193"/>
        <dbReference type="ChEBI" id="CHEBI:15354"/>
        <dbReference type="ChEBI" id="CHEBI:15710"/>
        <dbReference type="ChEBI" id="CHEBI:17499"/>
        <dbReference type="EC" id="1.1.99.1"/>
    </reaction>
</comment>
<comment type="catalytic activity">
    <reaction evidence="1">
        <text>betaine aldehyde + NAD(+) + H2O = glycine betaine + NADH + 2 H(+)</text>
        <dbReference type="Rhea" id="RHEA:15305"/>
        <dbReference type="ChEBI" id="CHEBI:15377"/>
        <dbReference type="ChEBI" id="CHEBI:15378"/>
        <dbReference type="ChEBI" id="CHEBI:15710"/>
        <dbReference type="ChEBI" id="CHEBI:17750"/>
        <dbReference type="ChEBI" id="CHEBI:57540"/>
        <dbReference type="ChEBI" id="CHEBI:57945"/>
        <dbReference type="EC" id="1.2.1.8"/>
    </reaction>
</comment>
<comment type="cofactor">
    <cofactor evidence="1">
        <name>FAD</name>
        <dbReference type="ChEBI" id="CHEBI:57692"/>
    </cofactor>
</comment>
<comment type="pathway">
    <text evidence="1">Amine and polyamine biosynthesis; betaine biosynthesis via choline pathway; betaine aldehyde from choline (cytochrome c reductase route): step 1/1.</text>
</comment>
<comment type="similarity">
    <text evidence="1">Belongs to the GMC oxidoreductase family.</text>
</comment>
<evidence type="ECO:0000255" key="1">
    <source>
        <dbReference type="HAMAP-Rule" id="MF_00750"/>
    </source>
</evidence>
<evidence type="ECO:0000256" key="2">
    <source>
        <dbReference type="SAM" id="MobiDB-lite"/>
    </source>
</evidence>
<name>BETA_BURM1</name>
<sequence>MTTREYDYIICGAGSAGNVLATRLTEDPNVTVLLLEAGGPDYRFDFRTQMPAALAYPLQGRRYNWAYETDPEPHMDNRRMECGRGKGLGGSSLINGMCYIRGNALDYDNWATHQGLENWTYLDCLPYFKKAETRDIGPNDYHGGDGPVSVTTSKPGVNPLFEAMVEAGVQAGYPRTEDLNGYQQEGFGPMDRTVTPKGRRASTARGYLDQAKTRPNLEIVTHALADRILFDGKRASGVTYLRGNERATAHARREVLVCSGAIASPQLLQRSGVGPGAWLKELDIPIVLDLPGVGQNLQDHLEMYIQYECKEPVSLYPALKWWNQPKIGLEWMLNGTGLGASNHFEAGGFIRTRDDDPWPNIQYHFLPVAINYNGSNAIEMHGFQAHVGSMRSPSRGRVKLRSRDPNAHPSILFNYMAEALDWREFRDAIRATREIMRQPALDRYRGRELNPGADLKSDKELDAFVRARAETAFHPSCSCKMGYDDMAVVDNEGRVHGLEGLRVVDASIMPIITTGNLNAPTIMIAEKIADKIRGRKPLERANVPYFVANGAPARNVAKAVRQPETV</sequence>